<protein>
    <recommendedName>
        <fullName evidence="1">Putative pre-16S rRNA nuclease</fullName>
        <ecNumber evidence="1">3.1.-.-</ecNumber>
    </recommendedName>
</protein>
<evidence type="ECO:0000255" key="1">
    <source>
        <dbReference type="HAMAP-Rule" id="MF_00651"/>
    </source>
</evidence>
<reference key="1">
    <citation type="journal article" date="2001" name="Proc. Natl. Acad. Sci. U.S.A.">
        <title>Genome sequence of an industrial microorganism Streptomyces avermitilis: deducing the ability of producing secondary metabolites.</title>
        <authorList>
            <person name="Omura S."/>
            <person name="Ikeda H."/>
            <person name="Ishikawa J."/>
            <person name="Hanamoto A."/>
            <person name="Takahashi C."/>
            <person name="Shinose M."/>
            <person name="Takahashi Y."/>
            <person name="Horikawa H."/>
            <person name="Nakazawa H."/>
            <person name="Osonoe T."/>
            <person name="Kikuchi H."/>
            <person name="Shiba T."/>
            <person name="Sakaki Y."/>
            <person name="Hattori M."/>
        </authorList>
    </citation>
    <scope>NUCLEOTIDE SEQUENCE [LARGE SCALE GENOMIC DNA]</scope>
    <source>
        <strain>ATCC 31267 / DSM 46492 / JCM 5070 / NBRC 14893 / NCIMB 12804 / NRRL 8165 / MA-4680</strain>
    </source>
</reference>
<reference key="2">
    <citation type="journal article" date="2003" name="Nat. Biotechnol.">
        <title>Complete genome sequence and comparative analysis of the industrial microorganism Streptomyces avermitilis.</title>
        <authorList>
            <person name="Ikeda H."/>
            <person name="Ishikawa J."/>
            <person name="Hanamoto A."/>
            <person name="Shinose M."/>
            <person name="Kikuchi H."/>
            <person name="Shiba T."/>
            <person name="Sakaki Y."/>
            <person name="Hattori M."/>
            <person name="Omura S."/>
        </authorList>
    </citation>
    <scope>NUCLEOTIDE SEQUENCE [LARGE SCALE GENOMIC DNA]</scope>
    <source>
        <strain>ATCC 31267 / DSM 46492 / JCM 5070 / NBRC 14893 / NCIMB 12804 / NRRL 8165 / MA-4680</strain>
    </source>
</reference>
<keyword id="KW-0963">Cytoplasm</keyword>
<keyword id="KW-0378">Hydrolase</keyword>
<keyword id="KW-0540">Nuclease</keyword>
<keyword id="KW-1185">Reference proteome</keyword>
<keyword id="KW-0690">Ribosome biogenesis</keyword>
<dbReference type="EC" id="3.1.-.-" evidence="1"/>
<dbReference type="EMBL" id="BA000030">
    <property type="protein sequence ID" value="BAC74562.1"/>
    <property type="molecule type" value="Genomic_DNA"/>
</dbReference>
<dbReference type="SMR" id="Q827S3"/>
<dbReference type="KEGG" id="sma:SAVERM_6851"/>
<dbReference type="eggNOG" id="COG0816">
    <property type="taxonomic scope" value="Bacteria"/>
</dbReference>
<dbReference type="HOGENOM" id="CLU_098240_0_0_11"/>
<dbReference type="Proteomes" id="UP000000428">
    <property type="component" value="Chromosome"/>
</dbReference>
<dbReference type="GO" id="GO:0005829">
    <property type="term" value="C:cytosol"/>
    <property type="evidence" value="ECO:0007669"/>
    <property type="project" value="TreeGrafter"/>
</dbReference>
<dbReference type="GO" id="GO:0004518">
    <property type="term" value="F:nuclease activity"/>
    <property type="evidence" value="ECO:0007669"/>
    <property type="project" value="UniProtKB-KW"/>
</dbReference>
<dbReference type="GO" id="GO:0000967">
    <property type="term" value="P:rRNA 5'-end processing"/>
    <property type="evidence" value="ECO:0007669"/>
    <property type="project" value="UniProtKB-UniRule"/>
</dbReference>
<dbReference type="CDD" id="cd16964">
    <property type="entry name" value="YqgF"/>
    <property type="match status" value="1"/>
</dbReference>
<dbReference type="FunFam" id="3.30.420.140:FF:000005">
    <property type="entry name" value="Putative pre-16S rRNA nuclease"/>
    <property type="match status" value="1"/>
</dbReference>
<dbReference type="Gene3D" id="3.30.420.140">
    <property type="entry name" value="YqgF/RNase H-like domain"/>
    <property type="match status" value="1"/>
</dbReference>
<dbReference type="HAMAP" id="MF_00651">
    <property type="entry name" value="Nuclease_YqgF"/>
    <property type="match status" value="1"/>
</dbReference>
<dbReference type="InterPro" id="IPR012337">
    <property type="entry name" value="RNaseH-like_sf"/>
</dbReference>
<dbReference type="InterPro" id="IPR005227">
    <property type="entry name" value="YqgF"/>
</dbReference>
<dbReference type="InterPro" id="IPR006641">
    <property type="entry name" value="YqgF/RNaseH-like_dom"/>
</dbReference>
<dbReference type="InterPro" id="IPR037027">
    <property type="entry name" value="YqgF/RNaseH-like_dom_sf"/>
</dbReference>
<dbReference type="NCBIfam" id="TIGR00250">
    <property type="entry name" value="RNAse_H_YqgF"/>
    <property type="match status" value="1"/>
</dbReference>
<dbReference type="PANTHER" id="PTHR33317">
    <property type="entry name" value="POLYNUCLEOTIDYL TRANSFERASE, RIBONUCLEASE H-LIKE SUPERFAMILY PROTEIN"/>
    <property type="match status" value="1"/>
</dbReference>
<dbReference type="PANTHER" id="PTHR33317:SF4">
    <property type="entry name" value="POLYNUCLEOTIDYL TRANSFERASE, RIBONUCLEASE H-LIKE SUPERFAMILY PROTEIN"/>
    <property type="match status" value="1"/>
</dbReference>
<dbReference type="Pfam" id="PF03652">
    <property type="entry name" value="RuvX"/>
    <property type="match status" value="1"/>
</dbReference>
<dbReference type="SMART" id="SM00732">
    <property type="entry name" value="YqgFc"/>
    <property type="match status" value="1"/>
</dbReference>
<dbReference type="SUPFAM" id="SSF53098">
    <property type="entry name" value="Ribonuclease H-like"/>
    <property type="match status" value="1"/>
</dbReference>
<feature type="chain" id="PRO_0000172147" description="Putative pre-16S rRNA nuclease">
    <location>
        <begin position="1"/>
        <end position="156"/>
    </location>
</feature>
<comment type="function">
    <text evidence="1">Could be a nuclease involved in processing of the 5'-end of pre-16S rRNA.</text>
</comment>
<comment type="subcellular location">
    <subcellularLocation>
        <location evidence="1">Cytoplasm</location>
    </subcellularLocation>
</comment>
<comment type="similarity">
    <text evidence="1">Belongs to the YqgF nuclease family.</text>
</comment>
<name>YQGF_STRAW</name>
<sequence>MGMRRGRRLAVDVGDARIGVASCDPDGILATPVETVPGRDVPAAHRRLKQLVEEYEPIEVVLGLPRSLKGGEGPAAVKVRAFAQELARVIAPVPVRLMDERMTTVTASQGLRASGVKSKKGRSVIDQAAAVIILQQALESERVSGKAPGEGVEVVI</sequence>
<accession>Q827S3</accession>
<gene>
    <name type="ordered locus">SAV_6851</name>
</gene>
<proteinExistence type="inferred from homology"/>
<organism>
    <name type="scientific">Streptomyces avermitilis (strain ATCC 31267 / DSM 46492 / JCM 5070 / NBRC 14893 / NCIMB 12804 / NRRL 8165 / MA-4680)</name>
    <dbReference type="NCBI Taxonomy" id="227882"/>
    <lineage>
        <taxon>Bacteria</taxon>
        <taxon>Bacillati</taxon>
        <taxon>Actinomycetota</taxon>
        <taxon>Actinomycetes</taxon>
        <taxon>Kitasatosporales</taxon>
        <taxon>Streptomycetaceae</taxon>
        <taxon>Streptomyces</taxon>
    </lineage>
</organism>